<comment type="function">
    <text evidence="1">Part of the high-affinity ATP-driven potassium transport (or Kdp) system, which catalyzes the hydrolysis of ATP coupled with the electrogenic transport of potassium into the cytoplasm. This subunit acts as a catalytic chaperone that increases the ATP-binding affinity of the ATP-hydrolyzing subunit KdpB by the formation of a transient KdpB/KdpC/ATP ternary complex.</text>
</comment>
<comment type="subunit">
    <text evidence="1">The system is composed of three essential subunits: KdpA, KdpB and KdpC.</text>
</comment>
<comment type="subcellular location">
    <subcellularLocation>
        <location evidence="1">Cell membrane</location>
        <topology evidence="1">Single-pass membrane protein</topology>
    </subcellularLocation>
</comment>
<comment type="similarity">
    <text evidence="1">Belongs to the KdpC family.</text>
</comment>
<proteinExistence type="inferred from homology"/>
<geneLocation type="plasmid">
    <name>pNRC200</name>
</geneLocation>
<evidence type="ECO:0000255" key="1">
    <source>
        <dbReference type="HAMAP-Rule" id="MF_00276"/>
    </source>
</evidence>
<evidence type="ECO:0000256" key="2">
    <source>
        <dbReference type="SAM" id="MobiDB-lite"/>
    </source>
</evidence>
<accession>P57687</accession>
<reference key="1">
    <citation type="journal article" date="2000" name="Proc. Natl. Acad. Sci. U.S.A.">
        <title>Genome sequence of Halobacterium species NRC-1.</title>
        <authorList>
            <person name="Ng W.V."/>
            <person name="Kennedy S.P."/>
            <person name="Mahairas G.G."/>
            <person name="Berquist B."/>
            <person name="Pan M."/>
            <person name="Shukla H.D."/>
            <person name="Lasky S.R."/>
            <person name="Baliga N.S."/>
            <person name="Thorsson V."/>
            <person name="Sbrogna J."/>
            <person name="Swartzell S."/>
            <person name="Weir D."/>
            <person name="Hall J."/>
            <person name="Dahl T.A."/>
            <person name="Welti R."/>
            <person name="Goo Y.A."/>
            <person name="Leithauser B."/>
            <person name="Keller K."/>
            <person name="Cruz R."/>
            <person name="Danson M.J."/>
            <person name="Hough D.W."/>
            <person name="Maddocks D.G."/>
            <person name="Jablonski P.E."/>
            <person name="Krebs M.P."/>
            <person name="Angevine C.M."/>
            <person name="Dale H."/>
            <person name="Isenbarger T.A."/>
            <person name="Peck R.F."/>
            <person name="Pohlschroder M."/>
            <person name="Spudich J.L."/>
            <person name="Jung K.-H."/>
            <person name="Alam M."/>
            <person name="Freitas T."/>
            <person name="Hou S."/>
            <person name="Daniels C.J."/>
            <person name="Dennis P.P."/>
            <person name="Omer A.D."/>
            <person name="Ebhardt H."/>
            <person name="Lowe T.M."/>
            <person name="Liang P."/>
            <person name="Riley M."/>
            <person name="Hood L."/>
            <person name="DasSarma S."/>
        </authorList>
    </citation>
    <scope>NUCLEOTIDE SEQUENCE [LARGE SCALE GENOMIC DNA]</scope>
    <source>
        <strain>ATCC 700922 / JCM 11081 / NRC-1</strain>
    </source>
</reference>
<name>KDPC_HALSA</name>
<organism>
    <name type="scientific">Halobacterium salinarum (strain ATCC 700922 / JCM 11081 / NRC-1)</name>
    <name type="common">Halobacterium halobium</name>
    <dbReference type="NCBI Taxonomy" id="64091"/>
    <lineage>
        <taxon>Archaea</taxon>
        <taxon>Methanobacteriati</taxon>
        <taxon>Methanobacteriota</taxon>
        <taxon>Stenosarchaea group</taxon>
        <taxon>Halobacteria</taxon>
        <taxon>Halobacteriales</taxon>
        <taxon>Halobacteriaceae</taxon>
        <taxon>Halobacterium</taxon>
        <taxon>Halobacterium salinarum NRC-34001</taxon>
    </lineage>
</organism>
<keyword id="KW-0067">ATP-binding</keyword>
<keyword id="KW-1003">Cell membrane</keyword>
<keyword id="KW-0406">Ion transport</keyword>
<keyword id="KW-0472">Membrane</keyword>
<keyword id="KW-0547">Nucleotide-binding</keyword>
<keyword id="KW-0614">Plasmid</keyword>
<keyword id="KW-0630">Potassium</keyword>
<keyword id="KW-0633">Potassium transport</keyword>
<keyword id="KW-1185">Reference proteome</keyword>
<keyword id="KW-0812">Transmembrane</keyword>
<keyword id="KW-1133">Transmembrane helix</keyword>
<keyword id="KW-0813">Transport</keyword>
<gene>
    <name evidence="1" type="primary">kdpC</name>
    <name type="ordered locus">VNG_6178G</name>
</gene>
<feature type="chain" id="PRO_0000197025" description="Potassium-transporting ATPase KdpC subunit">
    <location>
        <begin position="1"/>
        <end position="216"/>
    </location>
</feature>
<feature type="transmembrane region" description="Helical" evidence="1">
    <location>
        <begin position="12"/>
        <end position="32"/>
    </location>
</feature>
<feature type="region of interest" description="Disordered" evidence="2">
    <location>
        <begin position="197"/>
        <end position="216"/>
    </location>
</feature>
<feature type="compositionally biased region" description="Polar residues" evidence="2">
    <location>
        <begin position="197"/>
        <end position="207"/>
    </location>
</feature>
<protein>
    <recommendedName>
        <fullName evidence="1">Potassium-transporting ATPase KdpC subunit</fullName>
    </recommendedName>
    <alternativeName>
        <fullName evidence="1">ATP phosphohydrolase [potassium-transporting] C chain</fullName>
    </alternativeName>
    <alternativeName>
        <fullName evidence="1">Potassium-binding and translocating subunit C</fullName>
    </alternativeName>
    <alternativeName>
        <fullName evidence="1">Potassium-translocating ATPase C chain</fullName>
    </alternativeName>
</protein>
<sequence>MNRQDLAVPLRLLGVSLLVFGLLYQGSLMAIGDAVFPNSSAGSPVYVDGQEQPVGSQMIGQQFRPGQPEDVQYFWSRPSANDYNAMTSASTNWGPTNPLLSERVRADLQNISQYETPDDSVPVNLVSESGSSYDAHISPAAAEYQVLRVANQTGISEQRLNEMIDEATKEPWLGIWGHERVNVLELNLMVRDALNEQNETDQNSDMNASEIANGDH</sequence>
<dbReference type="EMBL" id="AE004438">
    <property type="protein sequence ID" value="AAG20845.1"/>
    <property type="molecule type" value="Genomic_DNA"/>
</dbReference>
<dbReference type="RefSeq" id="WP_010904058.1">
    <property type="nucleotide sequence ID" value="NZ_BK010831.1"/>
</dbReference>
<dbReference type="SMR" id="P57687"/>
<dbReference type="GeneID" id="89350627"/>
<dbReference type="KEGG" id="hal:VNG_6178G"/>
<dbReference type="PATRIC" id="fig|64091.14.peg.2202"/>
<dbReference type="HOGENOM" id="CLU_077094_1_0_2"/>
<dbReference type="InParanoid" id="P57687"/>
<dbReference type="OrthoDB" id="8035at2157"/>
<dbReference type="PhylomeDB" id="P57687"/>
<dbReference type="Proteomes" id="UP000000554">
    <property type="component" value="Plasmid pNRC200"/>
</dbReference>
<dbReference type="GO" id="GO:0005886">
    <property type="term" value="C:plasma membrane"/>
    <property type="evidence" value="ECO:0007669"/>
    <property type="project" value="UniProtKB-SubCell"/>
</dbReference>
<dbReference type="GO" id="GO:0005524">
    <property type="term" value="F:ATP binding"/>
    <property type="evidence" value="ECO:0007669"/>
    <property type="project" value="UniProtKB-UniRule"/>
</dbReference>
<dbReference type="GO" id="GO:0008556">
    <property type="term" value="F:P-type potassium transmembrane transporter activity"/>
    <property type="evidence" value="ECO:0000318"/>
    <property type="project" value="GO_Central"/>
</dbReference>
<dbReference type="GO" id="GO:0071805">
    <property type="term" value="P:potassium ion transmembrane transport"/>
    <property type="evidence" value="ECO:0000318"/>
    <property type="project" value="GO_Central"/>
</dbReference>
<dbReference type="HAMAP" id="MF_00276">
    <property type="entry name" value="KdpC"/>
    <property type="match status" value="1"/>
</dbReference>
<dbReference type="InterPro" id="IPR003820">
    <property type="entry name" value="KdpC"/>
</dbReference>
<dbReference type="PANTHER" id="PTHR30042">
    <property type="entry name" value="POTASSIUM-TRANSPORTING ATPASE C CHAIN"/>
    <property type="match status" value="1"/>
</dbReference>
<dbReference type="PANTHER" id="PTHR30042:SF2">
    <property type="entry name" value="POTASSIUM-TRANSPORTING ATPASE KDPC SUBUNIT"/>
    <property type="match status" value="1"/>
</dbReference>
<dbReference type="Pfam" id="PF02669">
    <property type="entry name" value="KdpC"/>
    <property type="match status" value="1"/>
</dbReference>
<dbReference type="PIRSF" id="PIRSF001296">
    <property type="entry name" value="K_ATPase_KdpC"/>
    <property type="match status" value="1"/>
</dbReference>